<keyword id="KW-0131">Cell cycle</keyword>
<keyword id="KW-0132">Cell division</keyword>
<keyword id="KW-0137">Centromere</keyword>
<keyword id="KW-0158">Chromosome</keyword>
<keyword id="KW-0159">Chromosome partition</keyword>
<keyword id="KW-0175">Coiled coil</keyword>
<keyword id="KW-0963">Cytoplasm</keyword>
<keyword id="KW-0206">Cytoskeleton</keyword>
<keyword id="KW-0995">Kinetochore</keyword>
<keyword id="KW-0493">Microtubule</keyword>
<keyword id="KW-0498">Mitosis</keyword>
<keyword id="KW-0539">Nucleus</keyword>
<keyword id="KW-1185">Reference proteome</keyword>
<dbReference type="EMBL" id="AE016818">
    <property type="protein sequence ID" value="AAS52369.1"/>
    <property type="molecule type" value="Genomic_DNA"/>
</dbReference>
<dbReference type="RefSeq" id="NP_984545.1">
    <property type="nucleotide sequence ID" value="NM_209898.1"/>
</dbReference>
<dbReference type="SMR" id="Q758R8"/>
<dbReference type="FunCoup" id="Q758R8">
    <property type="interactions" value="40"/>
</dbReference>
<dbReference type="STRING" id="284811.Q758R8"/>
<dbReference type="EnsemblFungi" id="AAS52369">
    <property type="protein sequence ID" value="AAS52369"/>
    <property type="gene ID" value="AGOS_AEL315W"/>
</dbReference>
<dbReference type="GeneID" id="4620717"/>
<dbReference type="KEGG" id="ago:AGOS_AEL315W"/>
<dbReference type="eggNOG" id="ENOG502QSS0">
    <property type="taxonomic scope" value="Eukaryota"/>
</dbReference>
<dbReference type="HOGENOM" id="CLU_970457_0_0_1"/>
<dbReference type="InParanoid" id="Q758R8"/>
<dbReference type="OMA" id="LIRDCNP"/>
<dbReference type="OrthoDB" id="10016597at2759"/>
<dbReference type="Proteomes" id="UP000000591">
    <property type="component" value="Chromosome V"/>
</dbReference>
<dbReference type="GO" id="GO:0005737">
    <property type="term" value="C:cytoplasm"/>
    <property type="evidence" value="ECO:0007669"/>
    <property type="project" value="UniProtKB-KW"/>
</dbReference>
<dbReference type="GO" id="GO:0042729">
    <property type="term" value="C:DASH complex"/>
    <property type="evidence" value="ECO:0000250"/>
    <property type="project" value="UniProtKB"/>
</dbReference>
<dbReference type="GO" id="GO:0005876">
    <property type="term" value="C:spindle microtubule"/>
    <property type="evidence" value="ECO:0007669"/>
    <property type="project" value="InterPro"/>
</dbReference>
<dbReference type="GO" id="GO:0051010">
    <property type="term" value="F:microtubule plus-end binding"/>
    <property type="evidence" value="ECO:0007669"/>
    <property type="project" value="EnsemblFungi"/>
</dbReference>
<dbReference type="GO" id="GO:0008608">
    <property type="term" value="P:attachment of spindle microtubules to kinetochore"/>
    <property type="evidence" value="ECO:0000250"/>
    <property type="project" value="UniProtKB"/>
</dbReference>
<dbReference type="GO" id="GO:0051301">
    <property type="term" value="P:cell division"/>
    <property type="evidence" value="ECO:0007669"/>
    <property type="project" value="UniProtKB-KW"/>
</dbReference>
<dbReference type="GO" id="GO:1990758">
    <property type="term" value="P:mitotic sister chromatid biorientation"/>
    <property type="evidence" value="ECO:0000250"/>
    <property type="project" value="UniProtKB"/>
</dbReference>
<dbReference type="GO" id="GO:0051987">
    <property type="term" value="P:positive regulation of attachment of spindle microtubules to kinetochore"/>
    <property type="evidence" value="ECO:0007669"/>
    <property type="project" value="EnsemblFungi"/>
</dbReference>
<dbReference type="GO" id="GO:0031116">
    <property type="term" value="P:positive regulation of microtubule polymerization"/>
    <property type="evidence" value="ECO:0007669"/>
    <property type="project" value="EnsemblFungi"/>
</dbReference>
<dbReference type="GO" id="GO:1990976">
    <property type="term" value="P:protein transport along microtubule to mitotic spindle pole body"/>
    <property type="evidence" value="ECO:0000250"/>
    <property type="project" value="UniProtKB"/>
</dbReference>
<dbReference type="InterPro" id="IPR013966">
    <property type="entry name" value="Spc34"/>
</dbReference>
<dbReference type="Pfam" id="PF08657">
    <property type="entry name" value="DASH_Spc34"/>
    <property type="match status" value="1"/>
</dbReference>
<protein>
    <recommendedName>
        <fullName>DASH complex subunit SPC34</fullName>
    </recommendedName>
    <alternativeName>
        <fullName>Outer kinetochore protein SPC34</fullName>
    </alternativeName>
</protein>
<name>SPC34_EREGS</name>
<feature type="chain" id="PRO_0000211550" description="DASH complex subunit SPC34">
    <location>
        <begin position="1"/>
        <end position="290"/>
    </location>
</feature>
<feature type="region of interest" description="Disordered" evidence="4">
    <location>
        <begin position="238"/>
        <end position="262"/>
    </location>
</feature>
<feature type="coiled-coil region" evidence="3">
    <location>
        <begin position="220"/>
        <end position="290"/>
    </location>
</feature>
<feature type="compositionally biased region" description="Acidic residues" evidence="4">
    <location>
        <begin position="245"/>
        <end position="255"/>
    </location>
</feature>
<reference key="1">
    <citation type="journal article" date="2004" name="Science">
        <title>The Ashbya gossypii genome as a tool for mapping the ancient Saccharomyces cerevisiae genome.</title>
        <authorList>
            <person name="Dietrich F.S."/>
            <person name="Voegeli S."/>
            <person name="Brachat S."/>
            <person name="Lerch A."/>
            <person name="Gates K."/>
            <person name="Steiner S."/>
            <person name="Mohr C."/>
            <person name="Poehlmann R."/>
            <person name="Luedi P."/>
            <person name="Choi S."/>
            <person name="Wing R.A."/>
            <person name="Flavier A."/>
            <person name="Gaffney T.D."/>
            <person name="Philippsen P."/>
        </authorList>
    </citation>
    <scope>NUCLEOTIDE SEQUENCE [LARGE SCALE GENOMIC DNA]</scope>
    <source>
        <strain>ATCC 10895 / CBS 109.51 / FGSC 9923 / NRRL Y-1056</strain>
    </source>
</reference>
<reference key="2">
    <citation type="journal article" date="2013" name="G3 (Bethesda)">
        <title>Genomes of Ashbya fungi isolated from insects reveal four mating-type loci, numerous translocations, lack of transposons, and distinct gene duplications.</title>
        <authorList>
            <person name="Dietrich F.S."/>
            <person name="Voegeli S."/>
            <person name="Kuo S."/>
            <person name="Philippsen P."/>
        </authorList>
    </citation>
    <scope>GENOME REANNOTATION</scope>
    <source>
        <strain>ATCC 10895 / CBS 109.51 / FGSC 9923 / NRRL Y-1056</strain>
    </source>
</reference>
<evidence type="ECO:0000250" key="1">
    <source>
        <dbReference type="UniProtKB" id="O14285"/>
    </source>
</evidence>
<evidence type="ECO:0000250" key="2">
    <source>
        <dbReference type="UniProtKB" id="P36131"/>
    </source>
</evidence>
<evidence type="ECO:0000255" key="3"/>
<evidence type="ECO:0000256" key="4">
    <source>
        <dbReference type="SAM" id="MobiDB-lite"/>
    </source>
</evidence>
<evidence type="ECO:0000305" key="5"/>
<comment type="function">
    <text evidence="2">Component of the DASH complex that connects microtubules with kinetochores and couples microtubule depolymerisation to chromosome movement; it is involved in retrieving kinetochores to the spindle poles before their re-orientation on the spindle in early mitosis and allows microtubule depolymerization to pull chromosomes apart and resist detachment during anaphase. Kinetochores, consisting of a centromere-associated inner segment and a microtubule-contacting outer segment, play a crucial role in chromosome segregation by mediating the physical connection between centromeric DNA and microtubules. Kinetochores also serve as an input point for the spindle assembly checkpoint, which delays anaphase until all chromosomes have bioriented on the mitotic spindle.</text>
</comment>
<comment type="subunit">
    <text evidence="1 2">Component of the DASH complex consisting of ASK1, DAD1, DAD2, DAD3, DAD4, DAM1, DUO1, HSK3, SPC19 and SPC34, with a stoichiometry of one copy of each subunit per complex. Multiple DASH complexes oligomerize to form a ring that encircles spindle microtubules and organizes the rod-like NDC80 complexes of the outer kinetochore. DASH complex oligomerization strengthens microtubule attachments (By similarity). On cytoplasmic microtubules, DASH complexes appear to form patches instead of rings (By similarity).</text>
</comment>
<comment type="subcellular location">
    <subcellularLocation>
        <location evidence="2">Nucleus</location>
    </subcellularLocation>
    <subcellularLocation>
        <location evidence="2">Cytoplasm</location>
        <location evidence="2">Cytoskeleton</location>
        <location evidence="2">Spindle</location>
    </subcellularLocation>
    <subcellularLocation>
        <location evidence="2">Chromosome</location>
        <location evidence="2">Centromere</location>
        <location evidence="2">Kinetochore</location>
    </subcellularLocation>
</comment>
<comment type="similarity">
    <text evidence="5">Belongs to the DASH complex SPC34 family.</text>
</comment>
<sequence>MSESLSYCLDQIKESADSIATLYFKPPGIFQNALVHNSKTSYAEIITRLIRDADPVDEMSLYMTDKGGKLRRKDGKQGVYDHLTERAATLKRARLLGAPEETPIVHVPKEFYLKQHDIITKKKQRQNRDFLFDEFSKESGGMFEVLIKKFAGDQQVRNLLLALQNGSVITGEDASSRRKTMFVEDFSVELILRLLREIVTQWPLNEHRTKYEHLLQTYHDISDATNKLRAQIADQEHRLQSQDALSEEPDADDDDVAHPTSGVSYLIQQELDEIDALERELEQLRRDSRT</sequence>
<proteinExistence type="inferred from homology"/>
<accession>Q758R8</accession>
<organism>
    <name type="scientific">Eremothecium gossypii (strain ATCC 10895 / CBS 109.51 / FGSC 9923 / NRRL Y-1056)</name>
    <name type="common">Yeast</name>
    <name type="synonym">Ashbya gossypii</name>
    <dbReference type="NCBI Taxonomy" id="284811"/>
    <lineage>
        <taxon>Eukaryota</taxon>
        <taxon>Fungi</taxon>
        <taxon>Dikarya</taxon>
        <taxon>Ascomycota</taxon>
        <taxon>Saccharomycotina</taxon>
        <taxon>Saccharomycetes</taxon>
        <taxon>Saccharomycetales</taxon>
        <taxon>Saccharomycetaceae</taxon>
        <taxon>Eremothecium</taxon>
    </lineage>
</organism>
<gene>
    <name type="primary">SPC34</name>
    <name type="ordered locus">AEL315W</name>
</gene>